<accession>Q52LW3</accession>
<accession>O15463</accession>
<accession>Q59H86</accession>
<accession>Q5VYZ0</accession>
<accession>Q6NVX2</accession>
<accession>Q8TBI6</accession>
<protein>
    <recommendedName>
        <fullName>Rho GTPase-activating protein 29</fullName>
    </recommendedName>
    <alternativeName>
        <fullName>PTPL1-associated RhoGAP protein 1</fullName>
    </alternativeName>
    <alternativeName>
        <fullName>Rho-type GTPase-activating protein 29</fullName>
    </alternativeName>
</protein>
<sequence length="1261" mass="142064">MIAHKQKKTKKKRAWASGQLSTDITTSEMGLKSLSSNSIFDPDYIKELVNDIRKFSHMLLYLKEAIFSDCFKEVIHIRLEELLRVLKSIMNKHQNLNSVDLQNAAEMLTAKVKAVNFTEVNEENKNDLFQEVFSSIETLAFTFGNILTNFLMGDVGNDSLLRLPVSRETKSFENVSVESVDSSSEKGNFSPLELDNVLLKNTDSIELALSYAKTWSKYTKNIVSWVEKKLNLELESTRNMVKLAEATRTNIGIQEFMPLQSLFTNALLNDIESSHLLQQTIAALQANKFVQPLLGRKNEMEKQRKEIKELWKQEQNKMLEAENALKKAKLLCMQRQDEYEKAKSSMFRAEEEHLSSSGGLAKNLNKQLEKKRRLEEEALQKVEEANELYKVCVTNVEERRNDLENTKREILAQLRTLVFQCDLTLKAVTVNLFHMQHLQAASLADSLQSLCDSAKLYDPGQEYSEFVKATNSTEEEKVDGNVNKHLNSSQPSGFGPANSLEDVVRLPDSSNKIEEDRCSNSADITGPSFIRSWTFGMFSDSESTGGSSESRSLDSESISPGDFHRKLPRTPSSGTMSSADDLDEREPPSPSETGPNSLGTFKKTLMSKAALTHKFRKLRSPTKCRDCEGIVVFQGVECEECLLVCHRKCLENLVIICGHQKLPGKIHLFGAEFTQVAKKEPDGIPFILKICASEIENRALCLQGIYRVCGNKIKTEKLCQALENGMHLVDISEFSSHDICDVLKLYLRQLPEPFILFRLYKEFIDLAKEIQHVNEEQETKKNSLEDKKWPNMCIEINRILLKSKDLLRQLPASNFNSLHFLIVHLKRVVDHAEENKMNSKNLGVIFGPSLIRPRPTTAPITISSLAEYSNQARLVEFLITYSQKIFDGSLQPQDVMCSIGVVDQGCFPKPLLSPEERDIERSMKSLFFSSKEDIHTSESESKIFERATSFEESERKQNALGKCDACLSDKAQLLLDQEAESASQKIEDGKTPKPLSLKSDRSTNNVERHTPRTKIRPVSLPVDRLLLASPPNERNGRNMGNVNLDKFCKNPAFEGVNRKDAATTVCSKFNGFDQQTLQKIQDKQYEQNSLTAKTTMIMPSALQEKGVTTSLQISGDHSINATQPSKPYAEPVRSVREASERRSSDSYPLAPVRAPRTLQPQHWTTFYKPHAPIISIRGNEEKPASPSAAVPPGTDHDPHGLVVKSMPDPDKASACPGQATGQPKEDSEELGLPDVNPMCQRPRLKRMQQFEDLEGEIPQFV</sequence>
<keyword id="KW-0025">Alternative splicing</keyword>
<keyword id="KW-0175">Coiled coil</keyword>
<keyword id="KW-0903">Direct protein sequencing</keyword>
<keyword id="KW-0343">GTPase activation</keyword>
<keyword id="KW-0479">Metal-binding</keyword>
<keyword id="KW-0597">Phosphoprotein</keyword>
<keyword id="KW-1267">Proteomics identification</keyword>
<keyword id="KW-1185">Reference proteome</keyword>
<keyword id="KW-0862">Zinc</keyword>
<keyword id="KW-0863">Zinc-finger</keyword>
<name>RHG29_HUMAN</name>
<gene>
    <name type="primary">ARHGAP29</name>
    <name type="synonym">PARG1</name>
</gene>
<reference key="1">
    <citation type="journal article" date="1997" name="J. Biol. Chem.">
        <title>A novel GTPase-activating protein for Rho interacts with a PDZ domain of the protein-tyrosine phosphatase PTPL1.</title>
        <authorList>
            <person name="Saras J."/>
            <person name="Franzen P."/>
            <person name="Aspenstroem P."/>
            <person name="Hellman U."/>
            <person name="Gonez L.J."/>
            <person name="Heldin C.-H."/>
        </authorList>
    </citation>
    <scope>NUCLEOTIDE SEQUENCE [MRNA] (ISOFORM 1)</scope>
    <scope>PROTEIN SEQUENCE OF 64-72; 221-228; 349-357; 456-468; 666-678; 943-946; 971-985; 1015-1024; 1069-1079 AND 1212-1224</scope>
    <scope>FUNCTION</scope>
    <scope>TISSUE SPECIFICITY</scope>
    <scope>INTERACTION WITH PTPN13</scope>
    <scope>VARIANT ASP-1255</scope>
    <source>
        <tissue>Skeletal muscle</tissue>
    </source>
</reference>
<reference key="2">
    <citation type="journal article" date="2006" name="Nature">
        <title>The DNA sequence and biological annotation of human chromosome 1.</title>
        <authorList>
            <person name="Gregory S.G."/>
            <person name="Barlow K.F."/>
            <person name="McLay K.E."/>
            <person name="Kaul R."/>
            <person name="Swarbreck D."/>
            <person name="Dunham A."/>
            <person name="Scott C.E."/>
            <person name="Howe K.L."/>
            <person name="Woodfine K."/>
            <person name="Spencer C.C.A."/>
            <person name="Jones M.C."/>
            <person name="Gillson C."/>
            <person name="Searle S."/>
            <person name="Zhou Y."/>
            <person name="Kokocinski F."/>
            <person name="McDonald L."/>
            <person name="Evans R."/>
            <person name="Phillips K."/>
            <person name="Atkinson A."/>
            <person name="Cooper R."/>
            <person name="Jones C."/>
            <person name="Hall R.E."/>
            <person name="Andrews T.D."/>
            <person name="Lloyd C."/>
            <person name="Ainscough R."/>
            <person name="Almeida J.P."/>
            <person name="Ambrose K.D."/>
            <person name="Anderson F."/>
            <person name="Andrew R.W."/>
            <person name="Ashwell R.I.S."/>
            <person name="Aubin K."/>
            <person name="Babbage A.K."/>
            <person name="Bagguley C.L."/>
            <person name="Bailey J."/>
            <person name="Beasley H."/>
            <person name="Bethel G."/>
            <person name="Bird C.P."/>
            <person name="Bray-Allen S."/>
            <person name="Brown J.Y."/>
            <person name="Brown A.J."/>
            <person name="Buckley D."/>
            <person name="Burton J."/>
            <person name="Bye J."/>
            <person name="Carder C."/>
            <person name="Chapman J.C."/>
            <person name="Clark S.Y."/>
            <person name="Clarke G."/>
            <person name="Clee C."/>
            <person name="Cobley V."/>
            <person name="Collier R.E."/>
            <person name="Corby N."/>
            <person name="Coville G.J."/>
            <person name="Davies J."/>
            <person name="Deadman R."/>
            <person name="Dunn M."/>
            <person name="Earthrowl M."/>
            <person name="Ellington A.G."/>
            <person name="Errington H."/>
            <person name="Frankish A."/>
            <person name="Frankland J."/>
            <person name="French L."/>
            <person name="Garner P."/>
            <person name="Garnett J."/>
            <person name="Gay L."/>
            <person name="Ghori M.R.J."/>
            <person name="Gibson R."/>
            <person name="Gilby L.M."/>
            <person name="Gillett W."/>
            <person name="Glithero R.J."/>
            <person name="Grafham D.V."/>
            <person name="Griffiths C."/>
            <person name="Griffiths-Jones S."/>
            <person name="Grocock R."/>
            <person name="Hammond S."/>
            <person name="Harrison E.S.I."/>
            <person name="Hart E."/>
            <person name="Haugen E."/>
            <person name="Heath P.D."/>
            <person name="Holmes S."/>
            <person name="Holt K."/>
            <person name="Howden P.J."/>
            <person name="Hunt A.R."/>
            <person name="Hunt S.E."/>
            <person name="Hunter G."/>
            <person name="Isherwood J."/>
            <person name="James R."/>
            <person name="Johnson C."/>
            <person name="Johnson D."/>
            <person name="Joy A."/>
            <person name="Kay M."/>
            <person name="Kershaw J.K."/>
            <person name="Kibukawa M."/>
            <person name="Kimberley A.M."/>
            <person name="King A."/>
            <person name="Knights A.J."/>
            <person name="Lad H."/>
            <person name="Laird G."/>
            <person name="Lawlor S."/>
            <person name="Leongamornlert D.A."/>
            <person name="Lloyd D.M."/>
            <person name="Loveland J."/>
            <person name="Lovell J."/>
            <person name="Lush M.J."/>
            <person name="Lyne R."/>
            <person name="Martin S."/>
            <person name="Mashreghi-Mohammadi M."/>
            <person name="Matthews L."/>
            <person name="Matthews N.S.W."/>
            <person name="McLaren S."/>
            <person name="Milne S."/>
            <person name="Mistry S."/>
            <person name="Moore M.J.F."/>
            <person name="Nickerson T."/>
            <person name="O'Dell C.N."/>
            <person name="Oliver K."/>
            <person name="Palmeiri A."/>
            <person name="Palmer S.A."/>
            <person name="Parker A."/>
            <person name="Patel D."/>
            <person name="Pearce A.V."/>
            <person name="Peck A.I."/>
            <person name="Pelan S."/>
            <person name="Phelps K."/>
            <person name="Phillimore B.J."/>
            <person name="Plumb R."/>
            <person name="Rajan J."/>
            <person name="Raymond C."/>
            <person name="Rouse G."/>
            <person name="Saenphimmachak C."/>
            <person name="Sehra H.K."/>
            <person name="Sheridan E."/>
            <person name="Shownkeen R."/>
            <person name="Sims S."/>
            <person name="Skuce C.D."/>
            <person name="Smith M."/>
            <person name="Steward C."/>
            <person name="Subramanian S."/>
            <person name="Sycamore N."/>
            <person name="Tracey A."/>
            <person name="Tromans A."/>
            <person name="Van Helmond Z."/>
            <person name="Wall M."/>
            <person name="Wallis J.M."/>
            <person name="White S."/>
            <person name="Whitehead S.L."/>
            <person name="Wilkinson J.E."/>
            <person name="Willey D.L."/>
            <person name="Williams H."/>
            <person name="Wilming L."/>
            <person name="Wray P.W."/>
            <person name="Wu Z."/>
            <person name="Coulson A."/>
            <person name="Vaudin M."/>
            <person name="Sulston J.E."/>
            <person name="Durbin R.M."/>
            <person name="Hubbard T."/>
            <person name="Wooster R."/>
            <person name="Dunham I."/>
            <person name="Carter N.P."/>
            <person name="McVean G."/>
            <person name="Ross M.T."/>
            <person name="Harrow J."/>
            <person name="Olson M.V."/>
            <person name="Beck S."/>
            <person name="Rogers J."/>
            <person name="Bentley D.R."/>
        </authorList>
    </citation>
    <scope>NUCLEOTIDE SEQUENCE [LARGE SCALE GENOMIC DNA]</scope>
</reference>
<reference key="3">
    <citation type="submission" date="2005-09" db="EMBL/GenBank/DDBJ databases">
        <authorList>
            <person name="Mural R.J."/>
            <person name="Istrail S."/>
            <person name="Sutton G.G."/>
            <person name="Florea L."/>
            <person name="Halpern A.L."/>
            <person name="Mobarry C.M."/>
            <person name="Lippert R."/>
            <person name="Walenz B."/>
            <person name="Shatkay H."/>
            <person name="Dew I."/>
            <person name="Miller J.R."/>
            <person name="Flanigan M.J."/>
            <person name="Edwards N.J."/>
            <person name="Bolanos R."/>
            <person name="Fasulo D."/>
            <person name="Halldorsson B.V."/>
            <person name="Hannenhalli S."/>
            <person name="Turner R."/>
            <person name="Yooseph S."/>
            <person name="Lu F."/>
            <person name="Nusskern D.R."/>
            <person name="Shue B.C."/>
            <person name="Zheng X.H."/>
            <person name="Zhong F."/>
            <person name="Delcher A.L."/>
            <person name="Huson D.H."/>
            <person name="Kravitz S.A."/>
            <person name="Mouchard L."/>
            <person name="Reinert K."/>
            <person name="Remington K.A."/>
            <person name="Clark A.G."/>
            <person name="Waterman M.S."/>
            <person name="Eichler E.E."/>
            <person name="Adams M.D."/>
            <person name="Hunkapiller M.W."/>
            <person name="Myers E.W."/>
            <person name="Venter J.C."/>
        </authorList>
    </citation>
    <scope>NUCLEOTIDE SEQUENCE [LARGE SCALE GENOMIC DNA]</scope>
</reference>
<reference key="4">
    <citation type="journal article" date="2004" name="Genome Res.">
        <title>The status, quality, and expansion of the NIH full-length cDNA project: the Mammalian Gene Collection (MGC).</title>
        <authorList>
            <consortium name="The MGC Project Team"/>
        </authorList>
    </citation>
    <scope>NUCLEOTIDE SEQUENCE [LARGE SCALE MRNA] (ISOFORMS 1 AND 2)</scope>
    <source>
        <tissue>Brain</tissue>
        <tissue>Colon</tissue>
    </source>
</reference>
<reference key="5">
    <citation type="submission" date="2005-03" db="EMBL/GenBank/DDBJ databases">
        <authorList>
            <person name="Totoki Y."/>
            <person name="Toyoda A."/>
            <person name="Takeda T."/>
            <person name="Sakaki Y."/>
            <person name="Tanaka A."/>
            <person name="Yokoyama S."/>
            <person name="Ohara O."/>
            <person name="Nagase T."/>
            <person name="Kikuno R.F."/>
        </authorList>
    </citation>
    <scope>NUCLEOTIDE SEQUENCE [LARGE SCALE MRNA] OF 10-1261 (ISOFORM 1)</scope>
    <scope>VARIANT ASP-1255</scope>
    <source>
        <tissue>Brain</tissue>
    </source>
</reference>
<reference key="6">
    <citation type="journal article" date="2001" name="J. Neurooncol.">
        <title>Glioma cell motility is associated with reduced transcription of proapoptotic and proliferation genes: a cDNA microarray analysis.</title>
        <authorList>
            <person name="Mariani L."/>
            <person name="Beaudry C."/>
            <person name="McDonough W.S."/>
            <person name="Hoelzinger D.B."/>
            <person name="Demuth T."/>
            <person name="Ross K.R."/>
            <person name="Berens T."/>
            <person name="Coons S.W."/>
            <person name="Watts G."/>
            <person name="Trent J.M."/>
            <person name="Wei J.S."/>
            <person name="Giese A."/>
            <person name="Berens M.E."/>
        </authorList>
    </citation>
    <scope>INDUCTION</scope>
</reference>
<reference key="7">
    <citation type="journal article" date="2005" name="Biochem. Biophys. Res. Commun.">
        <title>PARG1, a protein-tyrosine phosphatase-associated RhoGAP, as a putative Rap2 effector.</title>
        <authorList>
            <person name="Myagmar B.-E."/>
            <person name="Umikawa M."/>
            <person name="Asato T."/>
            <person name="Taira K."/>
            <person name="Oshiro M."/>
            <person name="Hino A."/>
            <person name="Takei K."/>
            <person name="Uezato H."/>
            <person name="Kariya K."/>
        </authorList>
    </citation>
    <scope>FUNCTION</scope>
    <scope>INTERACTION WITH RAP2A</scope>
</reference>
<reference key="8">
    <citation type="journal article" date="2006" name="Cell">
        <title>Global, in vivo, and site-specific phosphorylation dynamics in signaling networks.</title>
        <authorList>
            <person name="Olsen J.V."/>
            <person name="Blagoev B."/>
            <person name="Gnad F."/>
            <person name="Macek B."/>
            <person name="Kumar C."/>
            <person name="Mortensen P."/>
            <person name="Mann M."/>
        </authorList>
    </citation>
    <scope>PHOSPHORYLATION [LARGE SCALE ANALYSIS] AT SER-1019</scope>
    <scope>IDENTIFICATION BY MASS SPECTROMETRY [LARGE SCALE ANALYSIS]</scope>
    <source>
        <tissue>Cervix carcinoma</tissue>
    </source>
</reference>
<reference key="9">
    <citation type="journal article" date="2007" name="Haematologica">
        <title>Promoter methylation of PARG1, a novel candidate tumor suppressor gene in mantle-cell lymphomas.</title>
        <authorList>
            <person name="Ripperger T."/>
            <person name="von Neuhoff N."/>
            <person name="Kamphues K."/>
            <person name="Emura M."/>
            <person name="Lehmann U."/>
            <person name="Tauscher M."/>
            <person name="Schraders M."/>
            <person name="Groenen P."/>
            <person name="Skawran B."/>
            <person name="Rudolph C."/>
            <person name="Callet-Bauchu E."/>
            <person name="van Krieken J.H."/>
            <person name="Schlegelberger B."/>
            <person name="Steinemann D."/>
        </authorList>
    </citation>
    <scope>INDUCTION</scope>
</reference>
<reference key="10">
    <citation type="journal article" date="2008" name="Proc. Natl. Acad. Sci. U.S.A.">
        <title>A quantitative atlas of mitotic phosphorylation.</title>
        <authorList>
            <person name="Dephoure N."/>
            <person name="Zhou C."/>
            <person name="Villen J."/>
            <person name="Beausoleil S.A."/>
            <person name="Bakalarski C.E."/>
            <person name="Elledge S.J."/>
            <person name="Gygi S.P."/>
        </authorList>
    </citation>
    <scope>PHOSPHORYLATION [LARGE SCALE ANALYSIS] AT SER-176; SER-179; SER-949 AND SER-1146</scope>
    <scope>IDENTIFICATION BY MASS SPECTROMETRY [LARGE SCALE ANALYSIS]</scope>
    <source>
        <tissue>Cervix carcinoma</tissue>
    </source>
</reference>
<reference key="11">
    <citation type="journal article" date="2010" name="Sci. Signal.">
        <title>Quantitative phosphoproteomics reveals widespread full phosphorylation site occupancy during mitosis.</title>
        <authorList>
            <person name="Olsen J.V."/>
            <person name="Vermeulen M."/>
            <person name="Santamaria A."/>
            <person name="Kumar C."/>
            <person name="Miller M.L."/>
            <person name="Jensen L.J."/>
            <person name="Gnad F."/>
            <person name="Cox J."/>
            <person name="Jensen T.S."/>
            <person name="Nigg E.A."/>
            <person name="Brunak S."/>
            <person name="Mann M."/>
        </authorList>
    </citation>
    <scope>PHOSPHORYLATION [LARGE SCALE ANALYSIS] AT SER-190</scope>
    <scope>IDENTIFICATION BY MASS SPECTROMETRY [LARGE SCALE ANALYSIS]</scope>
    <source>
        <tissue>Cervix carcinoma</tissue>
    </source>
</reference>
<reference key="12">
    <citation type="journal article" date="2014" name="J. Proteomics">
        <title>An enzyme assisted RP-RPLC approach for in-depth analysis of human liver phosphoproteome.</title>
        <authorList>
            <person name="Bian Y."/>
            <person name="Song C."/>
            <person name="Cheng K."/>
            <person name="Dong M."/>
            <person name="Wang F."/>
            <person name="Huang J."/>
            <person name="Sun D."/>
            <person name="Wang L."/>
            <person name="Ye M."/>
            <person name="Zou H."/>
        </authorList>
    </citation>
    <scope>PHOSPHORYLATION [LARGE SCALE ANALYSIS] AT SER-499</scope>
    <scope>IDENTIFICATION BY MASS SPECTROMETRY [LARGE SCALE ANALYSIS]</scope>
    <source>
        <tissue>Liver</tissue>
    </source>
</reference>
<reference key="13">
    <citation type="journal article" date="2006" name="Science">
        <title>The consensus coding sequences of human breast and colorectal cancers.</title>
        <authorList>
            <person name="Sjoeblom T."/>
            <person name="Jones S."/>
            <person name="Wood L.D."/>
            <person name="Parsons D.W."/>
            <person name="Lin J."/>
            <person name="Barber T.D."/>
            <person name="Mandelker D."/>
            <person name="Leary R.J."/>
            <person name="Ptak J."/>
            <person name="Silliman N."/>
            <person name="Szabo S."/>
            <person name="Buckhaults P."/>
            <person name="Farrell C."/>
            <person name="Meeh P."/>
            <person name="Markowitz S.D."/>
            <person name="Willis J."/>
            <person name="Dawson D."/>
            <person name="Willson J.K.V."/>
            <person name="Gazdar A.F."/>
            <person name="Hartigan J."/>
            <person name="Wu L."/>
            <person name="Liu C."/>
            <person name="Parmigiani G."/>
            <person name="Park B.H."/>
            <person name="Bachman K.E."/>
            <person name="Papadopoulos N."/>
            <person name="Vogelstein B."/>
            <person name="Kinzler K.W."/>
            <person name="Velculescu V.E."/>
        </authorList>
    </citation>
    <scope>VARIANT [LARGE SCALE ANALYSIS] CYS-552</scope>
</reference>
<feature type="chain" id="PRO_0000317582" description="Rho GTPase-activating protein 29">
    <location>
        <begin position="1"/>
        <end position="1261"/>
    </location>
</feature>
<feature type="domain" description="F-BAR" evidence="7">
    <location>
        <begin position="192"/>
        <end position="462"/>
    </location>
</feature>
<feature type="domain" description="Rho-GAP" evidence="5">
    <location>
        <begin position="671"/>
        <end position="886"/>
    </location>
</feature>
<feature type="zinc finger region" description="Phorbol-ester/DAG-type" evidence="6">
    <location>
        <begin position="612"/>
        <end position="657"/>
    </location>
</feature>
<feature type="region of interest" description="Disordered" evidence="8">
    <location>
        <begin position="481"/>
        <end position="501"/>
    </location>
</feature>
<feature type="region of interest" description="Disordered" evidence="8">
    <location>
        <begin position="541"/>
        <end position="600"/>
    </location>
</feature>
<feature type="region of interest" description="Disordered" evidence="8">
    <location>
        <begin position="981"/>
        <end position="1011"/>
    </location>
</feature>
<feature type="region of interest" description="Disordered" evidence="8">
    <location>
        <begin position="1117"/>
        <end position="1153"/>
    </location>
</feature>
<feature type="region of interest" description="Disordered" evidence="8">
    <location>
        <begin position="1178"/>
        <end position="1238"/>
    </location>
</feature>
<feature type="region of interest" description="Interaction with PTPN13/PTPL1" evidence="13">
    <location>
        <begin position="1258"/>
        <end position="1261"/>
    </location>
</feature>
<feature type="coiled-coil region" evidence="4">
    <location>
        <begin position="296"/>
        <end position="418"/>
    </location>
</feature>
<feature type="compositionally biased region" description="Low complexity" evidence="8">
    <location>
        <begin position="541"/>
        <end position="559"/>
    </location>
</feature>
<feature type="compositionally biased region" description="Basic and acidic residues" evidence="8">
    <location>
        <begin position="998"/>
        <end position="1010"/>
    </location>
</feature>
<feature type="compositionally biased region" description="Basic and acidic residues" evidence="8">
    <location>
        <begin position="1133"/>
        <end position="1144"/>
    </location>
</feature>
<feature type="site" description="Arginine finger; crucial for GTP hydrolysis by stabilizing the transition state" evidence="5">
    <location>
        <position position="707"/>
    </location>
</feature>
<feature type="modified residue" description="Phosphoserine" evidence="3">
    <location>
        <position position="171"/>
    </location>
</feature>
<feature type="modified residue" description="Phosphoserine" evidence="18">
    <location>
        <position position="176"/>
    </location>
</feature>
<feature type="modified residue" description="Phosphoserine" evidence="18">
    <location>
        <position position="179"/>
    </location>
</feature>
<feature type="modified residue" description="Phosphoserine" evidence="19">
    <location>
        <position position="190"/>
    </location>
</feature>
<feature type="modified residue" description="Phosphoserine" evidence="20">
    <location>
        <position position="499"/>
    </location>
</feature>
<feature type="modified residue" description="Phosphoserine" evidence="3">
    <location>
        <position position="519"/>
    </location>
</feature>
<feature type="modified residue" description="Phosphoserine" evidence="2">
    <location>
        <position position="552"/>
    </location>
</feature>
<feature type="modified residue" description="Phosphoserine" evidence="2">
    <location>
        <position position="913"/>
    </location>
</feature>
<feature type="modified residue" description="Phosphoserine" evidence="18">
    <location>
        <position position="949"/>
    </location>
</feature>
<feature type="modified residue" description="Phosphoserine" evidence="17">
    <location>
        <position position="1019"/>
    </location>
</feature>
<feature type="modified residue" description="Phosphoserine" evidence="3">
    <location>
        <position position="1144"/>
    </location>
</feature>
<feature type="modified residue" description="Phosphoserine" evidence="18">
    <location>
        <position position="1146"/>
    </location>
</feature>
<feature type="splice variant" id="VSP_031058" description="In isoform 2." evidence="15">
    <original>EEANELYKVCV</original>
    <variation>TIFFFFICKLN</variation>
    <location>
        <begin position="383"/>
        <end position="393"/>
    </location>
</feature>
<feature type="splice variant" id="VSP_031059" description="In isoform 2." evidence="15">
    <location>
        <begin position="394"/>
        <end position="1261"/>
    </location>
</feature>
<feature type="sequence variant" id="VAR_038552" description="In a breast cancer sample; somatic mutation." evidence="11">
    <original>S</original>
    <variation>C</variation>
    <location>
        <position position="552"/>
    </location>
</feature>
<feature type="sequence variant" id="VAR_049145" description="In dbSNP:rs11165091.">
    <original>P</original>
    <variation>L</variation>
    <location>
        <position position="1192"/>
    </location>
</feature>
<feature type="sequence variant" id="VAR_038553" description="In dbSNP:rs1999272." evidence="13 14">
    <original>G</original>
    <variation>D</variation>
    <location>
        <position position="1255"/>
    </location>
</feature>
<feature type="sequence conflict" description="In Ref. 1; AAB81012." evidence="16" ref="1">
    <original>M</original>
    <variation>I</variation>
    <location>
        <position position="58"/>
    </location>
</feature>
<feature type="sequence conflict" description="In Ref. 1; AAB81012." evidence="16" ref="1">
    <original>L</original>
    <variation>F</variation>
    <location>
        <position position="160"/>
    </location>
</feature>
<feature type="sequence conflict" description="In Ref. 4; AAH67839." evidence="16" ref="4">
    <original>S</original>
    <variation>Y</variation>
    <location>
        <position position="166"/>
    </location>
</feature>
<feature type="sequence conflict" description="In Ref. 5; BAD92110." evidence="16" ref="5">
    <original>A</original>
    <variation>V</variation>
    <location>
        <position position="212"/>
    </location>
</feature>
<feature type="sequence conflict" description="In Ref. 1; AAB81012." evidence="16" ref="1">
    <original>N</original>
    <variation>D</variation>
    <location>
        <position position="386"/>
    </location>
</feature>
<feature type="sequence conflict" description="In Ref. 1; AAB81012." evidence="16" ref="1">
    <original>L</original>
    <variation>V</variation>
    <location>
        <position position="403"/>
    </location>
</feature>
<feature type="sequence conflict" description="In Ref. 1; AAB81012." evidence="16" ref="1">
    <original>S</original>
    <variation>R</variation>
    <location>
        <position position="446"/>
    </location>
</feature>
<feature type="sequence conflict" description="In Ref. 1; AAB81012." evidence="16" ref="1">
    <original>D</original>
    <variation>G</variation>
    <location>
        <position position="452"/>
    </location>
</feature>
<feature type="sequence conflict" description="In Ref. 1; AAB81012." evidence="16" ref="1">
    <original>Q</original>
    <variation>L</variation>
    <location>
        <position position="675"/>
    </location>
</feature>
<feature type="sequence conflict" description="In Ref. 1; AAB81012." evidence="16" ref="1">
    <original>Q</original>
    <variation>L</variation>
    <location>
        <position position="720"/>
    </location>
</feature>
<feature type="sequence conflict" description="In Ref. 1; AAB81012." evidence="16" ref="1">
    <original>T</original>
    <variation>Q</variation>
    <location>
        <position position="856"/>
    </location>
</feature>
<feature type="sequence conflict" description="In Ref. 1; AAB81012." evidence="16" ref="1">
    <original>T</original>
    <variation>A</variation>
    <location>
        <position position="991"/>
    </location>
</feature>
<feature type="sequence conflict" description="In Ref. 1; AAB81012." evidence="16" ref="1">
    <original>V</original>
    <variation>C</variation>
    <location>
        <position position="1190"/>
    </location>
</feature>
<comment type="function">
    <text evidence="10 13">GTPase activator for the Rho-type GTPases by converting them to an inactive GDP-bound state. Has strong activity toward RHOA, and weaker activity toward RAC1 and CDC42. May act as a specific effector of RAP2A to regulate Rho. In concert with RASIP1, suppresses RhoA signaling and dampens ROCK and MYH9 activities in endothelial cells and plays an essential role in blood vessel tubulogenesis.</text>
</comment>
<comment type="subunit">
    <text evidence="1">Interacts with PTPN13/PTPL1. Interacts with RAP2A via its coiled coil domain. Interacts with RASIP1 (By similarity).</text>
</comment>
<comment type="interaction">
    <interactant intactId="EBI-22012297">
        <id>Q52LW3-2</id>
    </interactant>
    <interactant intactId="EBI-10988864">
        <id>P46379-2</id>
        <label>BAG6</label>
    </interactant>
    <organismsDiffer>false</organismsDiffer>
    <experiments>3</experiments>
</comment>
<comment type="interaction">
    <interactant intactId="EBI-22012297">
        <id>Q52LW3-2</id>
    </interactant>
    <interactant intactId="EBI-466029">
        <id>P42858</id>
        <label>HTT</label>
    </interactant>
    <organismsDiffer>false</organismsDiffer>
    <experiments>3</experiments>
</comment>
<comment type="interaction">
    <interactant intactId="EBI-22012297">
        <id>Q52LW3-2</id>
    </interactant>
    <interactant intactId="EBI-948266">
        <id>O14901</id>
        <label>KLF11</label>
    </interactant>
    <organismsDiffer>false</organismsDiffer>
    <experiments>3</experiments>
</comment>
<comment type="interaction">
    <interactant intactId="EBI-22012297">
        <id>Q52LW3-2</id>
    </interactant>
    <interactant intactId="EBI-2811583">
        <id>Q9BVL2</id>
        <label>NUP58</label>
    </interactant>
    <organismsDiffer>false</organismsDiffer>
    <experiments>3</experiments>
</comment>
<comment type="alternative products">
    <event type="alternative splicing"/>
    <isoform>
        <id>Q52LW3-1</id>
        <name>1</name>
        <sequence type="displayed"/>
    </isoform>
    <isoform>
        <id>Q52LW3-2</id>
        <name>2</name>
        <sequence type="described" ref="VSP_031058 VSP_031059"/>
    </isoform>
</comment>
<comment type="tissue specificity">
    <text evidence="13">Widely expressed. Highly expressed in skeletal muscle and heart. Expressed at intermediate level in placenta, liver and pancreas. Weakly expressed in brain, lung and kidney.</text>
</comment>
<comment type="induction">
    <text evidence="9 12">Strongly down-regulated in mantle-cell lymphomas. Up-regulated in migrating glioma cells.</text>
</comment>
<comment type="sequence caution" evidence="16">
    <conflict type="miscellaneous discrepancy">
        <sequence resource="EMBL-CDS" id="AAH67839"/>
    </conflict>
    <text>Contaminating sequence. Potential poly-A sequence.</text>
</comment>
<evidence type="ECO:0000250" key="1"/>
<evidence type="ECO:0000250" key="2">
    <source>
        <dbReference type="UniProtKB" id="Q5PQJ5"/>
    </source>
</evidence>
<evidence type="ECO:0000250" key="3">
    <source>
        <dbReference type="UniProtKB" id="Q8CGF1"/>
    </source>
</evidence>
<evidence type="ECO:0000255" key="4"/>
<evidence type="ECO:0000255" key="5">
    <source>
        <dbReference type="PROSITE-ProRule" id="PRU00172"/>
    </source>
</evidence>
<evidence type="ECO:0000255" key="6">
    <source>
        <dbReference type="PROSITE-ProRule" id="PRU00226"/>
    </source>
</evidence>
<evidence type="ECO:0000255" key="7">
    <source>
        <dbReference type="PROSITE-ProRule" id="PRU01077"/>
    </source>
</evidence>
<evidence type="ECO:0000256" key="8">
    <source>
        <dbReference type="SAM" id="MobiDB-lite"/>
    </source>
</evidence>
<evidence type="ECO:0000269" key="9">
    <source>
    </source>
</evidence>
<evidence type="ECO:0000269" key="10">
    <source>
    </source>
</evidence>
<evidence type="ECO:0000269" key="11">
    <source>
    </source>
</evidence>
<evidence type="ECO:0000269" key="12">
    <source>
    </source>
</evidence>
<evidence type="ECO:0000269" key="13">
    <source>
    </source>
</evidence>
<evidence type="ECO:0000269" key="14">
    <source ref="5"/>
</evidence>
<evidence type="ECO:0000303" key="15">
    <source>
    </source>
</evidence>
<evidence type="ECO:0000305" key="16"/>
<evidence type="ECO:0007744" key="17">
    <source>
    </source>
</evidence>
<evidence type="ECO:0007744" key="18">
    <source>
    </source>
</evidence>
<evidence type="ECO:0007744" key="19">
    <source>
    </source>
</evidence>
<evidence type="ECO:0007744" key="20">
    <source>
    </source>
</evidence>
<dbReference type="EMBL" id="U90920">
    <property type="protein sequence ID" value="AAB81012.1"/>
    <property type="molecule type" value="mRNA"/>
</dbReference>
<dbReference type="EMBL" id="AL162735">
    <property type="status" value="NOT_ANNOTATED_CDS"/>
    <property type="molecule type" value="Genomic_DNA"/>
</dbReference>
<dbReference type="EMBL" id="CH471097">
    <property type="protein sequence ID" value="EAW73052.1"/>
    <property type="molecule type" value="Genomic_DNA"/>
</dbReference>
<dbReference type="EMBL" id="CH471097">
    <property type="protein sequence ID" value="EAW73051.1"/>
    <property type="molecule type" value="Genomic_DNA"/>
</dbReference>
<dbReference type="EMBL" id="BC022483">
    <property type="protein sequence ID" value="AAH22483.1"/>
    <property type="molecule type" value="mRNA"/>
</dbReference>
<dbReference type="EMBL" id="BC067839">
    <property type="protein sequence ID" value="AAH67839.1"/>
    <property type="status" value="ALT_SEQ"/>
    <property type="molecule type" value="mRNA"/>
</dbReference>
<dbReference type="EMBL" id="BC093741">
    <property type="protein sequence ID" value="AAH93741.1"/>
    <property type="molecule type" value="mRNA"/>
</dbReference>
<dbReference type="EMBL" id="BC093767">
    <property type="protein sequence ID" value="AAH93767.1"/>
    <property type="molecule type" value="mRNA"/>
</dbReference>
<dbReference type="EMBL" id="AB208873">
    <property type="protein sequence ID" value="BAD92110.1"/>
    <property type="molecule type" value="mRNA"/>
</dbReference>
<dbReference type="CCDS" id="CCDS748.1">
    <molecule id="Q52LW3-1"/>
</dbReference>
<dbReference type="PIR" id="E59430">
    <property type="entry name" value="E59430"/>
</dbReference>
<dbReference type="RefSeq" id="NP_001315593.1">
    <molecule id="Q52LW3-1"/>
    <property type="nucleotide sequence ID" value="NM_001328664.2"/>
</dbReference>
<dbReference type="RefSeq" id="NP_004806.3">
    <molecule id="Q52LW3-1"/>
    <property type="nucleotide sequence ID" value="NM_004815.3"/>
</dbReference>
<dbReference type="RefSeq" id="XP_011540741.1">
    <molecule id="Q52LW3-1"/>
    <property type="nucleotide sequence ID" value="XM_011542439.3"/>
</dbReference>
<dbReference type="RefSeq" id="XP_047290710.1">
    <molecule id="Q52LW3-1"/>
    <property type="nucleotide sequence ID" value="XM_047434754.1"/>
</dbReference>
<dbReference type="RefSeq" id="XP_047290715.1">
    <molecule id="Q52LW3-1"/>
    <property type="nucleotide sequence ID" value="XM_047434759.1"/>
</dbReference>
<dbReference type="SMR" id="Q52LW3"/>
<dbReference type="BioGRID" id="114806">
    <property type="interactions" value="76"/>
</dbReference>
<dbReference type="FunCoup" id="Q52LW3">
    <property type="interactions" value="480"/>
</dbReference>
<dbReference type="IntAct" id="Q52LW3">
    <property type="interactions" value="37"/>
</dbReference>
<dbReference type="MINT" id="Q52LW3"/>
<dbReference type="STRING" id="9606.ENSP00000260526"/>
<dbReference type="GlyGen" id="Q52LW3">
    <property type="glycosylation" value="1 site, 1 O-linked glycan (1 site)"/>
</dbReference>
<dbReference type="iPTMnet" id="Q52LW3"/>
<dbReference type="PhosphoSitePlus" id="Q52LW3"/>
<dbReference type="SwissPalm" id="Q52LW3"/>
<dbReference type="BioMuta" id="ARHGAP29"/>
<dbReference type="DMDM" id="166977701"/>
<dbReference type="jPOST" id="Q52LW3"/>
<dbReference type="MassIVE" id="Q52LW3"/>
<dbReference type="PaxDb" id="9606-ENSP00000260526"/>
<dbReference type="PeptideAtlas" id="Q52LW3"/>
<dbReference type="ProteomicsDB" id="62427">
    <molecule id="Q52LW3-1"/>
</dbReference>
<dbReference type="ProteomicsDB" id="62428">
    <molecule id="Q52LW3-2"/>
</dbReference>
<dbReference type="Pumba" id="Q52LW3"/>
<dbReference type="Antibodypedia" id="19948">
    <property type="antibodies" value="102 antibodies from 18 providers"/>
</dbReference>
<dbReference type="DNASU" id="9411"/>
<dbReference type="Ensembl" id="ENST00000260526.11">
    <molecule id="Q52LW3-1"/>
    <property type="protein sequence ID" value="ENSP00000260526.6"/>
    <property type="gene ID" value="ENSG00000137962.13"/>
</dbReference>
<dbReference type="Ensembl" id="ENST00000370217.3">
    <molecule id="Q52LW3-2"/>
    <property type="protein sequence ID" value="ENSP00000359237.3"/>
    <property type="gene ID" value="ENSG00000137962.13"/>
</dbReference>
<dbReference type="GeneID" id="9411"/>
<dbReference type="KEGG" id="hsa:9411"/>
<dbReference type="MANE-Select" id="ENST00000260526.11">
    <property type="protein sequence ID" value="ENSP00000260526.6"/>
    <property type="RefSeq nucleotide sequence ID" value="NM_004815.4"/>
    <property type="RefSeq protein sequence ID" value="NP_004806.3"/>
</dbReference>
<dbReference type="UCSC" id="uc001dqj.5">
    <molecule id="Q52LW3-1"/>
    <property type="organism name" value="human"/>
</dbReference>
<dbReference type="AGR" id="HGNC:30207"/>
<dbReference type="CTD" id="9411"/>
<dbReference type="DisGeNET" id="9411"/>
<dbReference type="GeneCards" id="ARHGAP29"/>
<dbReference type="HGNC" id="HGNC:30207">
    <property type="gene designation" value="ARHGAP29"/>
</dbReference>
<dbReference type="HPA" id="ENSG00000137962">
    <property type="expression patterns" value="Low tissue specificity"/>
</dbReference>
<dbReference type="MalaCards" id="ARHGAP29"/>
<dbReference type="MIM" id="610496">
    <property type="type" value="gene"/>
</dbReference>
<dbReference type="neXtProt" id="NX_Q52LW3"/>
<dbReference type="OpenTargets" id="ENSG00000137962"/>
<dbReference type="Orphanet" id="199306">
    <property type="disease" value="Cleft lip/palate"/>
</dbReference>
<dbReference type="PharmGKB" id="PA128394548"/>
<dbReference type="VEuPathDB" id="HostDB:ENSG00000137962"/>
<dbReference type="eggNOG" id="KOG1453">
    <property type="taxonomic scope" value="Eukaryota"/>
</dbReference>
<dbReference type="GeneTree" id="ENSGT00950000183110"/>
<dbReference type="HOGENOM" id="CLU_059009_0_0_1"/>
<dbReference type="InParanoid" id="Q52LW3"/>
<dbReference type="OMA" id="DQYQSCM"/>
<dbReference type="OrthoDB" id="79452at2759"/>
<dbReference type="PAN-GO" id="Q52LW3">
    <property type="GO annotations" value="3 GO annotations based on evolutionary models"/>
</dbReference>
<dbReference type="PhylomeDB" id="Q52LW3"/>
<dbReference type="TreeFam" id="TF351450"/>
<dbReference type="PathwayCommons" id="Q52LW3"/>
<dbReference type="Reactome" id="R-HSA-8980692">
    <property type="pathway name" value="RHOA GTPase cycle"/>
</dbReference>
<dbReference type="Reactome" id="R-HSA-9013148">
    <property type="pathway name" value="CDC42 GTPase cycle"/>
</dbReference>
<dbReference type="Reactome" id="R-HSA-9013149">
    <property type="pathway name" value="RAC1 GTPase cycle"/>
</dbReference>
<dbReference type="SignaLink" id="Q52LW3"/>
<dbReference type="SIGNOR" id="Q52LW3"/>
<dbReference type="BioGRID-ORCS" id="9411">
    <property type="hits" value="69 hits in 1158 CRISPR screens"/>
</dbReference>
<dbReference type="ChiTaRS" id="ARHGAP29">
    <property type="organism name" value="human"/>
</dbReference>
<dbReference type="GenomeRNAi" id="9411"/>
<dbReference type="Pharos" id="Q52LW3">
    <property type="development level" value="Tbio"/>
</dbReference>
<dbReference type="PRO" id="PR:Q52LW3"/>
<dbReference type="Proteomes" id="UP000005640">
    <property type="component" value="Chromosome 1"/>
</dbReference>
<dbReference type="RNAct" id="Q52LW3">
    <property type="molecule type" value="protein"/>
</dbReference>
<dbReference type="Bgee" id="ENSG00000137962">
    <property type="expression patterns" value="Expressed in visceral pleura and 202 other cell types or tissues"/>
</dbReference>
<dbReference type="ExpressionAtlas" id="Q52LW3">
    <property type="expression patterns" value="baseline and differential"/>
</dbReference>
<dbReference type="GO" id="GO:0005737">
    <property type="term" value="C:cytoplasm"/>
    <property type="evidence" value="ECO:0000314"/>
    <property type="project" value="BHF-UCL"/>
</dbReference>
<dbReference type="GO" id="GO:0005829">
    <property type="term" value="C:cytosol"/>
    <property type="evidence" value="ECO:0000304"/>
    <property type="project" value="Reactome"/>
</dbReference>
<dbReference type="GO" id="GO:0032991">
    <property type="term" value="C:protein-containing complex"/>
    <property type="evidence" value="ECO:0000314"/>
    <property type="project" value="UniProtKB"/>
</dbReference>
<dbReference type="GO" id="GO:0005096">
    <property type="term" value="F:GTPase activator activity"/>
    <property type="evidence" value="ECO:0000318"/>
    <property type="project" value="GO_Central"/>
</dbReference>
<dbReference type="GO" id="GO:0030165">
    <property type="term" value="F:PDZ domain binding"/>
    <property type="evidence" value="ECO:0000314"/>
    <property type="project" value="MGI"/>
</dbReference>
<dbReference type="GO" id="GO:0008270">
    <property type="term" value="F:zinc ion binding"/>
    <property type="evidence" value="ECO:0007669"/>
    <property type="project" value="UniProtKB-KW"/>
</dbReference>
<dbReference type="GO" id="GO:0051058">
    <property type="term" value="P:negative regulation of small GTPase mediated signal transduction"/>
    <property type="evidence" value="ECO:0000318"/>
    <property type="project" value="GO_Central"/>
</dbReference>
<dbReference type="GO" id="GO:0051056">
    <property type="term" value="P:regulation of small GTPase mediated signal transduction"/>
    <property type="evidence" value="ECO:0000304"/>
    <property type="project" value="Reactome"/>
</dbReference>
<dbReference type="GO" id="GO:0007266">
    <property type="term" value="P:Rho protein signal transduction"/>
    <property type="evidence" value="ECO:0000304"/>
    <property type="project" value="ProtInc"/>
</dbReference>
<dbReference type="CDD" id="cd20816">
    <property type="entry name" value="C1_GMIP-like"/>
    <property type="match status" value="1"/>
</dbReference>
<dbReference type="CDD" id="cd04409">
    <property type="entry name" value="RhoGAP_PARG1"/>
    <property type="match status" value="1"/>
</dbReference>
<dbReference type="FunFam" id="1.10.555.10:FF:000016">
    <property type="entry name" value="Rho GTPase activating protein 29"/>
    <property type="match status" value="1"/>
</dbReference>
<dbReference type="FunFam" id="1.20.1270.60:FF:000038">
    <property type="entry name" value="Rho GTPase activating protein 29"/>
    <property type="match status" value="1"/>
</dbReference>
<dbReference type="FunFam" id="3.30.60.20:FF:000046">
    <property type="entry name" value="Rho GTPase-activating protein 29"/>
    <property type="match status" value="1"/>
</dbReference>
<dbReference type="Gene3D" id="3.30.60.20">
    <property type="match status" value="1"/>
</dbReference>
<dbReference type="Gene3D" id="1.20.1270.60">
    <property type="entry name" value="Arfaptin homology (AH) domain/BAR domain"/>
    <property type="match status" value="1"/>
</dbReference>
<dbReference type="Gene3D" id="1.10.555.10">
    <property type="entry name" value="Rho GTPase activation protein"/>
    <property type="match status" value="1"/>
</dbReference>
<dbReference type="InterPro" id="IPR027267">
    <property type="entry name" value="AH/BAR_dom_sf"/>
</dbReference>
<dbReference type="InterPro" id="IPR046349">
    <property type="entry name" value="C1-like_sf"/>
</dbReference>
<dbReference type="InterPro" id="IPR031160">
    <property type="entry name" value="F_BAR"/>
</dbReference>
<dbReference type="InterPro" id="IPR054713">
    <property type="entry name" value="GMIP/FCHO2-like_FCH"/>
</dbReference>
<dbReference type="InterPro" id="IPR002219">
    <property type="entry name" value="PE/DAG-bd"/>
</dbReference>
<dbReference type="InterPro" id="IPR057028">
    <property type="entry name" value="RHG29_45_N"/>
</dbReference>
<dbReference type="InterPro" id="IPR008936">
    <property type="entry name" value="Rho_GTPase_activation_prot"/>
</dbReference>
<dbReference type="InterPro" id="IPR051025">
    <property type="entry name" value="RhoGAP"/>
</dbReference>
<dbReference type="InterPro" id="IPR000198">
    <property type="entry name" value="RhoGAP_dom"/>
</dbReference>
<dbReference type="PANTHER" id="PTHR15228:SF7">
    <property type="entry name" value="RHO GTPASE-ACTIVATING PROTEIN 29"/>
    <property type="match status" value="1"/>
</dbReference>
<dbReference type="PANTHER" id="PTHR15228">
    <property type="entry name" value="SPERMATHECAL PHYSIOLOGY VARIANT"/>
    <property type="match status" value="1"/>
</dbReference>
<dbReference type="Pfam" id="PF00130">
    <property type="entry name" value="C1_1"/>
    <property type="match status" value="1"/>
</dbReference>
<dbReference type="Pfam" id="PF22699">
    <property type="entry name" value="GMIP-like_FCH"/>
    <property type="match status" value="1"/>
</dbReference>
<dbReference type="Pfam" id="PF24235">
    <property type="entry name" value="RHG29_45_N"/>
    <property type="match status" value="1"/>
</dbReference>
<dbReference type="Pfam" id="PF00620">
    <property type="entry name" value="RhoGAP"/>
    <property type="match status" value="1"/>
</dbReference>
<dbReference type="SMART" id="SM00109">
    <property type="entry name" value="C1"/>
    <property type="match status" value="1"/>
</dbReference>
<dbReference type="SMART" id="SM00324">
    <property type="entry name" value="RhoGAP"/>
    <property type="match status" value="1"/>
</dbReference>
<dbReference type="SUPFAM" id="SSF103657">
    <property type="entry name" value="BAR/IMD domain-like"/>
    <property type="match status" value="1"/>
</dbReference>
<dbReference type="SUPFAM" id="SSF57889">
    <property type="entry name" value="Cysteine-rich domain"/>
    <property type="match status" value="1"/>
</dbReference>
<dbReference type="SUPFAM" id="SSF48350">
    <property type="entry name" value="GTPase activation domain, GAP"/>
    <property type="match status" value="1"/>
</dbReference>
<dbReference type="PROSITE" id="PS51741">
    <property type="entry name" value="F_BAR"/>
    <property type="match status" value="1"/>
</dbReference>
<dbReference type="PROSITE" id="PS50238">
    <property type="entry name" value="RHOGAP"/>
    <property type="match status" value="1"/>
</dbReference>
<dbReference type="PROSITE" id="PS00479">
    <property type="entry name" value="ZF_DAG_PE_1"/>
    <property type="match status" value="1"/>
</dbReference>
<dbReference type="PROSITE" id="PS50081">
    <property type="entry name" value="ZF_DAG_PE_2"/>
    <property type="match status" value="1"/>
</dbReference>
<proteinExistence type="evidence at protein level"/>
<organism>
    <name type="scientific">Homo sapiens</name>
    <name type="common">Human</name>
    <dbReference type="NCBI Taxonomy" id="9606"/>
    <lineage>
        <taxon>Eukaryota</taxon>
        <taxon>Metazoa</taxon>
        <taxon>Chordata</taxon>
        <taxon>Craniata</taxon>
        <taxon>Vertebrata</taxon>
        <taxon>Euteleostomi</taxon>
        <taxon>Mammalia</taxon>
        <taxon>Eutheria</taxon>
        <taxon>Euarchontoglires</taxon>
        <taxon>Primates</taxon>
        <taxon>Haplorrhini</taxon>
        <taxon>Catarrhini</taxon>
        <taxon>Hominidae</taxon>
        <taxon>Homo</taxon>
    </lineage>
</organism>